<dbReference type="EMBL" id="CP000029">
    <property type="protein sequence ID" value="AAW53725.1"/>
    <property type="molecule type" value="Genomic_DNA"/>
</dbReference>
<dbReference type="RefSeq" id="WP_001832105.1">
    <property type="nucleotide sequence ID" value="NC_002976.3"/>
</dbReference>
<dbReference type="SMR" id="Q5HRB1"/>
<dbReference type="STRING" id="176279.SERP0282"/>
<dbReference type="GeneID" id="50019445"/>
<dbReference type="KEGG" id="ser:SERP0282"/>
<dbReference type="eggNOG" id="COG2111">
    <property type="taxonomic scope" value="Bacteria"/>
</dbReference>
<dbReference type="HOGENOM" id="CLU_101659_1_1_9"/>
<dbReference type="Proteomes" id="UP000000531">
    <property type="component" value="Chromosome"/>
</dbReference>
<dbReference type="GO" id="GO:0005886">
    <property type="term" value="C:plasma membrane"/>
    <property type="evidence" value="ECO:0007669"/>
    <property type="project" value="UniProtKB-SubCell"/>
</dbReference>
<dbReference type="GO" id="GO:0015297">
    <property type="term" value="F:antiporter activity"/>
    <property type="evidence" value="ECO:0007669"/>
    <property type="project" value="UniProtKB-KW"/>
</dbReference>
<dbReference type="GO" id="GO:0006811">
    <property type="term" value="P:monoatomic ion transport"/>
    <property type="evidence" value="ECO:0007669"/>
    <property type="project" value="UniProtKB-KW"/>
</dbReference>
<dbReference type="InterPro" id="IPR050622">
    <property type="entry name" value="CPA3_antiporter_subunitB"/>
</dbReference>
<dbReference type="InterPro" id="IPR007182">
    <property type="entry name" value="MnhB"/>
</dbReference>
<dbReference type="NCBIfam" id="NF009223">
    <property type="entry name" value="PRK12573.1"/>
    <property type="match status" value="1"/>
</dbReference>
<dbReference type="NCBIfam" id="NF009224">
    <property type="entry name" value="PRK12574.1"/>
    <property type="match status" value="1"/>
</dbReference>
<dbReference type="PANTHER" id="PTHR33932">
    <property type="entry name" value="NA(+)/H(+) ANTIPORTER SUBUNIT B"/>
    <property type="match status" value="1"/>
</dbReference>
<dbReference type="PANTHER" id="PTHR33932:SF4">
    <property type="entry name" value="NA(+)_H(+) ANTIPORTER SUBUNIT B"/>
    <property type="match status" value="1"/>
</dbReference>
<dbReference type="Pfam" id="PF04039">
    <property type="entry name" value="MnhB"/>
    <property type="match status" value="1"/>
</dbReference>
<organism>
    <name type="scientific">Staphylococcus epidermidis (strain ATCC 35984 / DSM 28319 / BCRC 17069 / CCUG 31568 / BM 3577 / RP62A)</name>
    <dbReference type="NCBI Taxonomy" id="176279"/>
    <lineage>
        <taxon>Bacteria</taxon>
        <taxon>Bacillati</taxon>
        <taxon>Bacillota</taxon>
        <taxon>Bacilli</taxon>
        <taxon>Bacillales</taxon>
        <taxon>Staphylococcaceae</taxon>
        <taxon>Staphylococcus</taxon>
    </lineage>
</organism>
<reference key="1">
    <citation type="journal article" date="2005" name="J. Bacteriol.">
        <title>Insights on evolution of virulence and resistance from the complete genome analysis of an early methicillin-resistant Staphylococcus aureus strain and a biofilm-producing methicillin-resistant Staphylococcus epidermidis strain.</title>
        <authorList>
            <person name="Gill S.R."/>
            <person name="Fouts D.E."/>
            <person name="Archer G.L."/>
            <person name="Mongodin E.F."/>
            <person name="DeBoy R.T."/>
            <person name="Ravel J."/>
            <person name="Paulsen I.T."/>
            <person name="Kolonay J.F."/>
            <person name="Brinkac L.M."/>
            <person name="Beanan M.J."/>
            <person name="Dodson R.J."/>
            <person name="Daugherty S.C."/>
            <person name="Madupu R."/>
            <person name="Angiuoli S.V."/>
            <person name="Durkin A.S."/>
            <person name="Haft D.H."/>
            <person name="Vamathevan J.J."/>
            <person name="Khouri H."/>
            <person name="Utterback T.R."/>
            <person name="Lee C."/>
            <person name="Dimitrov G."/>
            <person name="Jiang L."/>
            <person name="Qin H."/>
            <person name="Weidman J."/>
            <person name="Tran K."/>
            <person name="Kang K.H."/>
            <person name="Hance I.R."/>
            <person name="Nelson K.E."/>
            <person name="Fraser C.M."/>
        </authorList>
    </citation>
    <scope>NUCLEOTIDE SEQUENCE [LARGE SCALE GENOMIC DNA]</scope>
    <source>
        <strain>ATCC 35984 / DSM 28319 / BCRC 17069 / CCUG 31568 / BM 3577 / RP62A</strain>
    </source>
</reference>
<gene>
    <name type="primary">mnhB2</name>
    <name type="synonym">mrpB2</name>
    <name type="ordered locus">SERP0282</name>
</gene>
<feature type="chain" id="PRO_0000372282" description="Putative antiporter subunit mnhB2">
    <location>
        <begin position="1"/>
        <end position="141"/>
    </location>
</feature>
<feature type="transmembrane region" description="Helical" evidence="2">
    <location>
        <begin position="10"/>
        <end position="30"/>
    </location>
</feature>
<feature type="transmembrane region" description="Helical" evidence="2">
    <location>
        <begin position="35"/>
        <end position="55"/>
    </location>
</feature>
<feature type="transmembrane region" description="Helical" evidence="2">
    <location>
        <begin position="70"/>
        <end position="90"/>
    </location>
</feature>
<feature type="transmembrane region" description="Helical" evidence="2">
    <location>
        <begin position="116"/>
        <end position="136"/>
    </location>
</feature>
<protein>
    <recommendedName>
        <fullName>Putative antiporter subunit mnhB2</fullName>
    </recommendedName>
    <alternativeName>
        <fullName>Mrp complex subunit B2</fullName>
    </alternativeName>
    <alternativeName>
        <fullName>Putative NADH-ubiquinone oxidoreductase subunit mnhB2</fullName>
    </alternativeName>
</protein>
<sequence>MKENDVVLKSVTKIVVFILLTFGFYVFFAGHNNPGGGFIGGLIFSSAFILMFLAFDVNEVLKSLPIDFKKLMIIGSLISVATASVPMFFGKPFLYQTEANVTFPLLGHVHVTTVTLFELGILLTVVGVIVTVMLSISGGRS</sequence>
<name>MNHB2_STAEQ</name>
<keyword id="KW-0050">Antiport</keyword>
<keyword id="KW-1003">Cell membrane</keyword>
<keyword id="KW-0406">Ion transport</keyword>
<keyword id="KW-0472">Membrane</keyword>
<keyword id="KW-1185">Reference proteome</keyword>
<keyword id="KW-0812">Transmembrane</keyword>
<keyword id="KW-1133">Transmembrane helix</keyword>
<keyword id="KW-0813">Transport</keyword>
<accession>Q5HRB1</accession>
<proteinExistence type="inferred from homology"/>
<evidence type="ECO:0000250" key="1"/>
<evidence type="ECO:0000255" key="2"/>
<evidence type="ECO:0000305" key="3"/>
<comment type="subunit">
    <text evidence="1">May form a heterooligomeric complex that consists of seven subunits: mnhA2, mnhB2, mnhC2, mnhD2, mnhE2, mnhF2 and mnhG2.</text>
</comment>
<comment type="subcellular location">
    <subcellularLocation>
        <location evidence="3">Cell membrane</location>
        <topology evidence="3">Multi-pass membrane protein</topology>
    </subcellularLocation>
</comment>
<comment type="similarity">
    <text evidence="3">Belongs to the CPA3 antiporters (TC 2.A.63) subunit B family.</text>
</comment>